<evidence type="ECO:0000250" key="1">
    <source>
        <dbReference type="UniProtKB" id="Q9VJI9"/>
    </source>
</evidence>
<evidence type="ECO:0000255" key="2">
    <source>
        <dbReference type="HAMAP-Rule" id="MF_03038"/>
    </source>
</evidence>
<proteinExistence type="inferred from homology"/>
<name>NUBP1_DROMO</name>
<keyword id="KW-0004">4Fe-4S</keyword>
<keyword id="KW-0067">ATP-binding</keyword>
<keyword id="KW-0963">Cytoplasm</keyword>
<keyword id="KW-0408">Iron</keyword>
<keyword id="KW-0411">Iron-sulfur</keyword>
<keyword id="KW-0479">Metal-binding</keyword>
<keyword id="KW-0547">Nucleotide-binding</keyword>
<keyword id="KW-1185">Reference proteome</keyword>
<feature type="chain" id="PRO_0000382605" description="Cytosolic Fe-S cluster assembly factor Nubp1 homolog">
    <location>
        <begin position="1"/>
        <end position="310"/>
    </location>
</feature>
<feature type="binding site" evidence="2">
    <location>
        <position position="9"/>
    </location>
    <ligand>
        <name>[4Fe-4S] cluster</name>
        <dbReference type="ChEBI" id="CHEBI:49883"/>
        <label>1</label>
    </ligand>
</feature>
<feature type="binding site" evidence="2">
    <location>
        <position position="23"/>
    </location>
    <ligand>
        <name>[4Fe-4S] cluster</name>
        <dbReference type="ChEBI" id="CHEBI:49883"/>
        <label>1</label>
    </ligand>
</feature>
<feature type="binding site" evidence="2">
    <location>
        <position position="26"/>
    </location>
    <ligand>
        <name>[4Fe-4S] cluster</name>
        <dbReference type="ChEBI" id="CHEBI:49883"/>
        <label>1</label>
    </ligand>
</feature>
<feature type="binding site" evidence="2">
    <location>
        <position position="32"/>
    </location>
    <ligand>
        <name>[4Fe-4S] cluster</name>
        <dbReference type="ChEBI" id="CHEBI:49883"/>
        <label>1</label>
    </ligand>
</feature>
<feature type="binding site" evidence="2">
    <location>
        <begin position="63"/>
        <end position="70"/>
    </location>
    <ligand>
        <name>ATP</name>
        <dbReference type="ChEBI" id="CHEBI:30616"/>
    </ligand>
</feature>
<feature type="binding site" evidence="2">
    <location>
        <position position="240"/>
    </location>
    <ligand>
        <name>[4Fe-4S] cluster</name>
        <dbReference type="ChEBI" id="CHEBI:49883"/>
        <label>2</label>
        <note>ligand shared with heterodimeric partner</note>
    </ligand>
</feature>
<feature type="binding site" evidence="2">
    <location>
        <position position="243"/>
    </location>
    <ligand>
        <name>[4Fe-4S] cluster</name>
        <dbReference type="ChEBI" id="CHEBI:49883"/>
        <label>2</label>
        <note>ligand shared with heterodimeric partner</note>
    </ligand>
</feature>
<comment type="function">
    <text evidence="2">Component of the cytosolic iron-sulfur (Fe/S) protein assembly (CIA) machinery. Required for maturation of extramitochondrial Fe-S proteins. The Nubp1-Nubp2 heterotetramer forms a Fe-S scaffold complex, mediating the de novo assembly of an Fe-S cluster and its transfer to target apoproteins.</text>
</comment>
<comment type="cofactor">
    <cofactor evidence="2">
        <name>[4Fe-4S] cluster</name>
        <dbReference type="ChEBI" id="CHEBI:49883"/>
    </cofactor>
    <text evidence="2">Binds 4 [4Fe-4S] clusters per heterotetramer. Contains two stable clusters in the N-termini of Nubp1 and two labile, bridging clusters between subunits of the Nubp1-Nubp2 heterotetramer.</text>
</comment>
<comment type="subunit">
    <text evidence="2">Heterotetramer of 2 Nubp1 and 2 Nubp2 chains.</text>
</comment>
<comment type="subcellular location">
    <subcellularLocation>
        <location evidence="2">Cytoplasm</location>
    </subcellularLocation>
</comment>
<comment type="similarity">
    <text evidence="2">Belongs to the Mrp/NBP35 ATP-binding proteins family. NUBP1/NBP35 subfamily.</text>
</comment>
<sequence length="310" mass="32822">MQAPPPEHCPGVESEQAGLVSACAGCPNQRICSDPNKKLEDPGKALVAAAMKDVKHKLLILSGKGGVGKSTVTTLLTRYLARSYPDSNFGVLDIDICGPSQPRLLGAVGENVHQSGSGWSPVGIDDNVCLMSIGFLLGSVDDAIIWRGPKKNGMIRQFLSEVDWGTLDLLLLDTPPGTSDEHLSVVSYLRDDSAPDSLKAIIVTTPQEVALLDVRKEINFCKKQRIPIVGVVENMSSFRCGNCGNSSEIFPAKTGGAAAMCQEMDVPLLGSLPLDPQVTRACDSGEDITAINNSTTEALATICSKIMASL</sequence>
<gene>
    <name evidence="1" type="primary">Nubp1</name>
    <name type="ORF">GI17051</name>
</gene>
<dbReference type="EMBL" id="CH933807">
    <property type="protein sequence ID" value="EDW11253.1"/>
    <property type="molecule type" value="Genomic_DNA"/>
</dbReference>
<dbReference type="SMR" id="B4KHX1"/>
<dbReference type="FunCoup" id="B4KHX1">
    <property type="interactions" value="803"/>
</dbReference>
<dbReference type="EnsemblMetazoa" id="FBtr0167776">
    <property type="protein sequence ID" value="FBpp0166268"/>
    <property type="gene ID" value="FBgn0139796"/>
</dbReference>
<dbReference type="EnsemblMetazoa" id="XM_002001775.4">
    <property type="protein sequence ID" value="XP_002001811.1"/>
    <property type="gene ID" value="LOC6575807"/>
</dbReference>
<dbReference type="GeneID" id="6575807"/>
<dbReference type="KEGG" id="dmo:Dmoj_GI17051"/>
<dbReference type="CTD" id="4682"/>
<dbReference type="eggNOG" id="KOG3022">
    <property type="taxonomic scope" value="Eukaryota"/>
</dbReference>
<dbReference type="HOGENOM" id="CLU_024839_0_1_1"/>
<dbReference type="InParanoid" id="B4KHX1"/>
<dbReference type="OMA" id="VSGCPMR"/>
<dbReference type="OrthoDB" id="1741334at2759"/>
<dbReference type="PhylomeDB" id="B4KHX1"/>
<dbReference type="Proteomes" id="UP000009192">
    <property type="component" value="Unassembled WGS sequence"/>
</dbReference>
<dbReference type="GO" id="GO:0005829">
    <property type="term" value="C:cytosol"/>
    <property type="evidence" value="ECO:0000250"/>
    <property type="project" value="UniProtKB"/>
</dbReference>
<dbReference type="GO" id="GO:0051539">
    <property type="term" value="F:4 iron, 4 sulfur cluster binding"/>
    <property type="evidence" value="ECO:0007669"/>
    <property type="project" value="UniProtKB-UniRule"/>
</dbReference>
<dbReference type="GO" id="GO:0005524">
    <property type="term" value="F:ATP binding"/>
    <property type="evidence" value="ECO:0007669"/>
    <property type="project" value="UniProtKB-KW"/>
</dbReference>
<dbReference type="GO" id="GO:0140663">
    <property type="term" value="F:ATP-dependent FeS chaperone activity"/>
    <property type="evidence" value="ECO:0007669"/>
    <property type="project" value="InterPro"/>
</dbReference>
<dbReference type="GO" id="GO:0051536">
    <property type="term" value="F:iron-sulfur cluster binding"/>
    <property type="evidence" value="ECO:0000250"/>
    <property type="project" value="UniProtKB"/>
</dbReference>
<dbReference type="GO" id="GO:0046872">
    <property type="term" value="F:metal ion binding"/>
    <property type="evidence" value="ECO:0007669"/>
    <property type="project" value="UniProtKB-KW"/>
</dbReference>
<dbReference type="GO" id="GO:0016226">
    <property type="term" value="P:iron-sulfur cluster assembly"/>
    <property type="evidence" value="ECO:0000250"/>
    <property type="project" value="UniProtKB"/>
</dbReference>
<dbReference type="CDD" id="cd02037">
    <property type="entry name" value="Mrp_NBP35"/>
    <property type="match status" value="1"/>
</dbReference>
<dbReference type="FunFam" id="3.40.50.300:FF:001759">
    <property type="entry name" value="Cytosolic Fe-S cluster assembly factor NUBP1 homolog"/>
    <property type="match status" value="1"/>
</dbReference>
<dbReference type="Gene3D" id="3.40.50.300">
    <property type="entry name" value="P-loop containing nucleotide triphosphate hydrolases"/>
    <property type="match status" value="1"/>
</dbReference>
<dbReference type="HAMAP" id="MF_02040">
    <property type="entry name" value="Mrp_NBP35"/>
    <property type="match status" value="1"/>
</dbReference>
<dbReference type="HAMAP" id="MF_03038">
    <property type="entry name" value="NUBP1"/>
    <property type="match status" value="1"/>
</dbReference>
<dbReference type="InterPro" id="IPR019591">
    <property type="entry name" value="Mrp/NBP35_ATP-bd"/>
</dbReference>
<dbReference type="InterPro" id="IPR028601">
    <property type="entry name" value="NUBP1/Nbp35"/>
</dbReference>
<dbReference type="InterPro" id="IPR027417">
    <property type="entry name" value="P-loop_NTPase"/>
</dbReference>
<dbReference type="InterPro" id="IPR033756">
    <property type="entry name" value="YlxH/NBP35"/>
</dbReference>
<dbReference type="PANTHER" id="PTHR23264:SF35">
    <property type="entry name" value="CYTOSOLIC FE-S CLUSTER ASSEMBLY FACTOR NUBP1"/>
    <property type="match status" value="1"/>
</dbReference>
<dbReference type="PANTHER" id="PTHR23264">
    <property type="entry name" value="NUCLEOTIDE-BINDING PROTEIN NBP35 YEAST -RELATED"/>
    <property type="match status" value="1"/>
</dbReference>
<dbReference type="Pfam" id="PF10609">
    <property type="entry name" value="ParA"/>
    <property type="match status" value="1"/>
</dbReference>
<dbReference type="SUPFAM" id="SSF52540">
    <property type="entry name" value="P-loop containing nucleoside triphosphate hydrolases"/>
    <property type="match status" value="1"/>
</dbReference>
<organism>
    <name type="scientific">Drosophila mojavensis</name>
    <name type="common">Fruit fly</name>
    <dbReference type="NCBI Taxonomy" id="7230"/>
    <lineage>
        <taxon>Eukaryota</taxon>
        <taxon>Metazoa</taxon>
        <taxon>Ecdysozoa</taxon>
        <taxon>Arthropoda</taxon>
        <taxon>Hexapoda</taxon>
        <taxon>Insecta</taxon>
        <taxon>Pterygota</taxon>
        <taxon>Neoptera</taxon>
        <taxon>Endopterygota</taxon>
        <taxon>Diptera</taxon>
        <taxon>Brachycera</taxon>
        <taxon>Muscomorpha</taxon>
        <taxon>Ephydroidea</taxon>
        <taxon>Drosophilidae</taxon>
        <taxon>Drosophila</taxon>
    </lineage>
</organism>
<protein>
    <recommendedName>
        <fullName evidence="2">Cytosolic Fe-S cluster assembly factor Nubp1 homolog</fullName>
    </recommendedName>
</protein>
<accession>B4KHX1</accession>
<reference key="1">
    <citation type="journal article" date="2007" name="Nature">
        <title>Evolution of genes and genomes on the Drosophila phylogeny.</title>
        <authorList>
            <consortium name="Drosophila 12 genomes consortium"/>
        </authorList>
    </citation>
    <scope>NUCLEOTIDE SEQUENCE [LARGE SCALE GENOMIC DNA]</scope>
    <source>
        <strain>Tucson 15081-1352.22</strain>
    </source>
</reference>